<sequence>MQSCRTVAVIPARHASTRFPGKPLAIIAGRTMIEHVWRRCQEAQAFDEVWVATDDDRIRAAVEGFGGKAVMTSPACATGTDRVAEVALGRPDIDIWVNVQGDEPLVDPATLQRLAGLFQDASVRMGTLVRPLEADEAASPHVVKAVLALNGDALYFSRSLVPHVREPGTPVQRWGHIGLYGYRREVLLSLAKLAPTPLEDAEKLEQLRALEHGIPIRCAKVTSHTVAVDLPGDVEKVEALMRARGG</sequence>
<name>KDSB_MYXXD</name>
<organism>
    <name type="scientific">Myxococcus xanthus (strain DK1622)</name>
    <dbReference type="NCBI Taxonomy" id="246197"/>
    <lineage>
        <taxon>Bacteria</taxon>
        <taxon>Pseudomonadati</taxon>
        <taxon>Myxococcota</taxon>
        <taxon>Myxococcia</taxon>
        <taxon>Myxococcales</taxon>
        <taxon>Cystobacterineae</taxon>
        <taxon>Myxococcaceae</taxon>
        <taxon>Myxococcus</taxon>
    </lineage>
</organism>
<protein>
    <recommendedName>
        <fullName evidence="1">3-deoxy-manno-octulosonate cytidylyltransferase</fullName>
        <ecNumber evidence="1">2.7.7.38</ecNumber>
    </recommendedName>
    <alternativeName>
        <fullName evidence="1">CMP-2-keto-3-deoxyoctulosonic acid synthase</fullName>
        <shortName evidence="1">CKS</shortName>
        <shortName evidence="1">CMP-KDO synthase</shortName>
    </alternativeName>
</protein>
<feature type="chain" id="PRO_0000370100" description="3-deoxy-manno-octulosonate cytidylyltransferase">
    <location>
        <begin position="1"/>
        <end position="246"/>
    </location>
</feature>
<accession>Q1DDB3</accession>
<keyword id="KW-0963">Cytoplasm</keyword>
<keyword id="KW-0448">Lipopolysaccharide biosynthesis</keyword>
<keyword id="KW-0548">Nucleotidyltransferase</keyword>
<keyword id="KW-1185">Reference proteome</keyword>
<keyword id="KW-0808">Transferase</keyword>
<evidence type="ECO:0000255" key="1">
    <source>
        <dbReference type="HAMAP-Rule" id="MF_00057"/>
    </source>
</evidence>
<dbReference type="EC" id="2.7.7.38" evidence="1"/>
<dbReference type="EMBL" id="CP000113">
    <property type="protein sequence ID" value="ABF92376.1"/>
    <property type="molecule type" value="Genomic_DNA"/>
</dbReference>
<dbReference type="RefSeq" id="WP_011551220.1">
    <property type="nucleotide sequence ID" value="NC_008095.1"/>
</dbReference>
<dbReference type="SMR" id="Q1DDB3"/>
<dbReference type="STRING" id="246197.MXAN_1100"/>
<dbReference type="EnsemblBacteria" id="ABF92376">
    <property type="protein sequence ID" value="ABF92376"/>
    <property type="gene ID" value="MXAN_1100"/>
</dbReference>
<dbReference type="GeneID" id="41358552"/>
<dbReference type="KEGG" id="mxa:MXAN_1100"/>
<dbReference type="eggNOG" id="COG1212">
    <property type="taxonomic scope" value="Bacteria"/>
</dbReference>
<dbReference type="HOGENOM" id="CLU_065038_0_1_7"/>
<dbReference type="OrthoDB" id="9815559at2"/>
<dbReference type="UniPathway" id="UPA00030"/>
<dbReference type="UniPathway" id="UPA00358">
    <property type="reaction ID" value="UER00476"/>
</dbReference>
<dbReference type="Proteomes" id="UP000002402">
    <property type="component" value="Chromosome"/>
</dbReference>
<dbReference type="GO" id="GO:0005829">
    <property type="term" value="C:cytosol"/>
    <property type="evidence" value="ECO:0007669"/>
    <property type="project" value="TreeGrafter"/>
</dbReference>
<dbReference type="GO" id="GO:0008690">
    <property type="term" value="F:3-deoxy-manno-octulosonate cytidylyltransferase activity"/>
    <property type="evidence" value="ECO:0007669"/>
    <property type="project" value="UniProtKB-UniRule"/>
</dbReference>
<dbReference type="GO" id="GO:0033468">
    <property type="term" value="P:CMP-keto-3-deoxy-D-manno-octulosonic acid biosynthetic process"/>
    <property type="evidence" value="ECO:0007669"/>
    <property type="project" value="UniProtKB-UniRule"/>
</dbReference>
<dbReference type="GO" id="GO:0009103">
    <property type="term" value="P:lipopolysaccharide biosynthetic process"/>
    <property type="evidence" value="ECO:0007669"/>
    <property type="project" value="UniProtKB-UniRule"/>
</dbReference>
<dbReference type="CDD" id="cd02517">
    <property type="entry name" value="CMP-KDO-Synthetase"/>
    <property type="match status" value="1"/>
</dbReference>
<dbReference type="Gene3D" id="3.90.550.10">
    <property type="entry name" value="Spore Coat Polysaccharide Biosynthesis Protein SpsA, Chain A"/>
    <property type="match status" value="1"/>
</dbReference>
<dbReference type="HAMAP" id="MF_00057">
    <property type="entry name" value="KdsB"/>
    <property type="match status" value="1"/>
</dbReference>
<dbReference type="InterPro" id="IPR003329">
    <property type="entry name" value="Cytidylyl_trans"/>
</dbReference>
<dbReference type="InterPro" id="IPR004528">
    <property type="entry name" value="KdsB"/>
</dbReference>
<dbReference type="InterPro" id="IPR029044">
    <property type="entry name" value="Nucleotide-diphossugar_trans"/>
</dbReference>
<dbReference type="NCBIfam" id="TIGR00466">
    <property type="entry name" value="kdsB"/>
    <property type="match status" value="1"/>
</dbReference>
<dbReference type="NCBIfam" id="NF003950">
    <property type="entry name" value="PRK05450.1-3"/>
    <property type="match status" value="1"/>
</dbReference>
<dbReference type="NCBIfam" id="NF003952">
    <property type="entry name" value="PRK05450.1-5"/>
    <property type="match status" value="1"/>
</dbReference>
<dbReference type="NCBIfam" id="NF009905">
    <property type="entry name" value="PRK13368.1"/>
    <property type="match status" value="1"/>
</dbReference>
<dbReference type="PANTHER" id="PTHR42866">
    <property type="entry name" value="3-DEOXY-MANNO-OCTULOSONATE CYTIDYLYLTRANSFERASE"/>
    <property type="match status" value="1"/>
</dbReference>
<dbReference type="PANTHER" id="PTHR42866:SF2">
    <property type="entry name" value="3-DEOXY-MANNO-OCTULOSONATE CYTIDYLYLTRANSFERASE, MITOCHONDRIAL"/>
    <property type="match status" value="1"/>
</dbReference>
<dbReference type="Pfam" id="PF02348">
    <property type="entry name" value="CTP_transf_3"/>
    <property type="match status" value="1"/>
</dbReference>
<dbReference type="SUPFAM" id="SSF53448">
    <property type="entry name" value="Nucleotide-diphospho-sugar transferases"/>
    <property type="match status" value="1"/>
</dbReference>
<reference key="1">
    <citation type="journal article" date="2006" name="Proc. Natl. Acad. Sci. U.S.A.">
        <title>Evolution of sensory complexity recorded in a myxobacterial genome.</title>
        <authorList>
            <person name="Goldman B.S."/>
            <person name="Nierman W.C."/>
            <person name="Kaiser D."/>
            <person name="Slater S.C."/>
            <person name="Durkin A.S."/>
            <person name="Eisen J.A."/>
            <person name="Ronning C.M."/>
            <person name="Barbazuk W.B."/>
            <person name="Blanchard M."/>
            <person name="Field C."/>
            <person name="Halling C."/>
            <person name="Hinkle G."/>
            <person name="Iartchuk O."/>
            <person name="Kim H.S."/>
            <person name="Mackenzie C."/>
            <person name="Madupu R."/>
            <person name="Miller N."/>
            <person name="Shvartsbeyn A."/>
            <person name="Sullivan S.A."/>
            <person name="Vaudin M."/>
            <person name="Wiegand R."/>
            <person name="Kaplan H.B."/>
        </authorList>
    </citation>
    <scope>NUCLEOTIDE SEQUENCE [LARGE SCALE GENOMIC DNA]</scope>
    <source>
        <strain>DK1622</strain>
    </source>
</reference>
<gene>
    <name evidence="1" type="primary">kdsB</name>
    <name type="ordered locus">MXAN_1100</name>
</gene>
<comment type="function">
    <text evidence="1">Activates KDO (a required 8-carbon sugar) for incorporation into bacterial lipopolysaccharide in Gram-negative bacteria.</text>
</comment>
<comment type="catalytic activity">
    <reaction evidence="1">
        <text>3-deoxy-alpha-D-manno-oct-2-ulosonate + CTP = CMP-3-deoxy-beta-D-manno-octulosonate + diphosphate</text>
        <dbReference type="Rhea" id="RHEA:23448"/>
        <dbReference type="ChEBI" id="CHEBI:33019"/>
        <dbReference type="ChEBI" id="CHEBI:37563"/>
        <dbReference type="ChEBI" id="CHEBI:85986"/>
        <dbReference type="ChEBI" id="CHEBI:85987"/>
        <dbReference type="EC" id="2.7.7.38"/>
    </reaction>
</comment>
<comment type="pathway">
    <text evidence="1">Nucleotide-sugar biosynthesis; CMP-3-deoxy-D-manno-octulosonate biosynthesis; CMP-3-deoxy-D-manno-octulosonate from 3-deoxy-D-manno-octulosonate and CTP: step 1/1.</text>
</comment>
<comment type="pathway">
    <text evidence="1">Bacterial outer membrane biogenesis; lipopolysaccharide biosynthesis.</text>
</comment>
<comment type="subcellular location">
    <subcellularLocation>
        <location evidence="1">Cytoplasm</location>
    </subcellularLocation>
</comment>
<comment type="similarity">
    <text evidence="1">Belongs to the KdsB family.</text>
</comment>
<proteinExistence type="inferred from homology"/>